<sequence length="381" mass="43257">MSNPSPQVPEEEASTSVCRPKSSMASTSRRQRRERRFRRYLSAGRLVRAQALLQRHPGLDVDAGQPPPLHRACARHDAPALCLLLRLGADPAHQDRHGDTALHAAARQGPDAYTDFFLPLLSRCPSAMGIKNKDGETPGQILGWGPPWDSAEEEEEDDASKEREWRQKLQGELEDEWQEVMGRFEGDASHETQEPESFSAWSDRLAREHAQKCQQQQREAEGSRRPPRAEGSSQSWRQQEEEQRLFRERARAKEEELRESRARRAQEALGDREPKPTRAGPREEHPRGAGRGSLWRFGDVPWPCPGGGDPEAMAAALVARGPPLEEQGALRRYLRVQQVRWHPDRFLQRFRSQIETWELGRVMGAVTALSQALNRHAEALK</sequence>
<feature type="chain" id="PRO_0000067009" description="NF-kappa-B inhibitor-like protein 1">
    <location>
        <begin position="1"/>
        <end position="381"/>
    </location>
</feature>
<feature type="repeat" description="ANK 1">
    <location>
        <begin position="64"/>
        <end position="93"/>
    </location>
</feature>
<feature type="repeat" description="ANK 2">
    <location>
        <begin position="97"/>
        <end position="130"/>
    </location>
</feature>
<feature type="region of interest" description="Disordered" evidence="1">
    <location>
        <begin position="1"/>
        <end position="34"/>
    </location>
</feature>
<feature type="region of interest" description="Disordered" evidence="1">
    <location>
        <begin position="129"/>
        <end position="167"/>
    </location>
</feature>
<feature type="region of interest" description="Disordered" evidence="1">
    <location>
        <begin position="186"/>
        <end position="294"/>
    </location>
</feature>
<feature type="compositionally biased region" description="Acidic residues" evidence="1">
    <location>
        <begin position="150"/>
        <end position="159"/>
    </location>
</feature>
<feature type="compositionally biased region" description="Basic and acidic residues" evidence="1">
    <location>
        <begin position="218"/>
        <end position="228"/>
    </location>
</feature>
<feature type="compositionally biased region" description="Basic and acidic residues" evidence="1">
    <location>
        <begin position="238"/>
        <end position="287"/>
    </location>
</feature>
<feature type="modified residue" description="Phosphoserine" evidence="11">
    <location>
        <position position="150"/>
    </location>
</feature>
<feature type="splice variant" id="VSP_041075" description="In isoform 2." evidence="7">
    <location>
        <begin position="1"/>
        <end position="23"/>
    </location>
</feature>
<feature type="splice variant" id="VSP_046261" description="In isoform 3." evidence="8">
    <location>
        <begin position="171"/>
        <end position="185"/>
    </location>
</feature>
<feature type="sequence variant" id="VAR_017798" description="In dbSNP:rs3130062." evidence="2 6">
    <original>R</original>
    <variation>C</variation>
    <location>
        <position position="224"/>
    </location>
</feature>
<feature type="sequence conflict" description="In Ref. 7; BAG62473." evidence="9" ref="7">
    <original>R</original>
    <variation>Q</variation>
    <location>
        <position position="48"/>
    </location>
</feature>
<feature type="sequence conflict" description="In Ref. 1; CAA54867." evidence="9" ref="1">
    <original>QQ</original>
    <variation>HE</variation>
    <location>
        <begin position="238"/>
        <end position="239"/>
    </location>
</feature>
<proteinExistence type="evidence at protein level"/>
<organism>
    <name type="scientific">Homo sapiens</name>
    <name type="common">Human</name>
    <dbReference type="NCBI Taxonomy" id="9606"/>
    <lineage>
        <taxon>Eukaryota</taxon>
        <taxon>Metazoa</taxon>
        <taxon>Chordata</taxon>
        <taxon>Craniata</taxon>
        <taxon>Vertebrata</taxon>
        <taxon>Euteleostomi</taxon>
        <taxon>Mammalia</taxon>
        <taxon>Eutheria</taxon>
        <taxon>Euarchontoglires</taxon>
        <taxon>Primates</taxon>
        <taxon>Haplorrhini</taxon>
        <taxon>Catarrhini</taxon>
        <taxon>Hominidae</taxon>
        <taxon>Homo</taxon>
    </lineage>
</organism>
<dbReference type="EMBL" id="X77909">
    <property type="protein sequence ID" value="CAA54867.1"/>
    <property type="molecule type" value="mRNA"/>
</dbReference>
<dbReference type="EMBL" id="AB000876">
    <property type="status" value="NOT_ANNOTATED_CDS"/>
    <property type="molecule type" value="Genomic_DNA"/>
</dbReference>
<dbReference type="EMBL" id="AB000882">
    <property type="status" value="NOT_ANNOTATED_CDS"/>
    <property type="molecule type" value="Genomic_DNA"/>
</dbReference>
<dbReference type="EMBL" id="AF097419">
    <property type="protein sequence ID" value="AAD38108.1"/>
    <property type="molecule type" value="mRNA"/>
</dbReference>
<dbReference type="EMBL" id="AF097420">
    <property type="protein sequence ID" value="AAD38109.1"/>
    <property type="molecule type" value="mRNA"/>
</dbReference>
<dbReference type="EMBL" id="AF097421">
    <property type="protein sequence ID" value="AAD38110.1"/>
    <property type="molecule type" value="mRNA"/>
</dbReference>
<dbReference type="EMBL" id="AF097422">
    <property type="protein sequence ID" value="AAD38111.1"/>
    <property type="molecule type" value="mRNA"/>
</dbReference>
<dbReference type="EMBL" id="AF097423">
    <property type="protein sequence ID" value="AAD38112.1"/>
    <property type="molecule type" value="mRNA"/>
</dbReference>
<dbReference type="EMBL" id="AF097424">
    <property type="protein sequence ID" value="AAD38113.1"/>
    <property type="molecule type" value="mRNA"/>
</dbReference>
<dbReference type="EMBL" id="AF097425">
    <property type="protein sequence ID" value="AAD38114.1"/>
    <property type="molecule type" value="mRNA"/>
</dbReference>
<dbReference type="EMBL" id="AF097426">
    <property type="protein sequence ID" value="AAD38115.1"/>
    <property type="molecule type" value="mRNA"/>
</dbReference>
<dbReference type="EMBL" id="AF097427">
    <property type="protein sequence ID" value="AAD38116.1"/>
    <property type="molecule type" value="mRNA"/>
</dbReference>
<dbReference type="EMBL" id="AF097428">
    <property type="protein sequence ID" value="AAD38117.1"/>
    <property type="molecule type" value="mRNA"/>
</dbReference>
<dbReference type="EMBL" id="AF097429">
    <property type="protein sequence ID" value="AAD38118.1"/>
    <property type="molecule type" value="mRNA"/>
</dbReference>
<dbReference type="EMBL" id="Y14768">
    <property type="protein sequence ID" value="CAA75072.1"/>
    <property type="molecule type" value="Genomic_DNA"/>
</dbReference>
<dbReference type="EMBL" id="AK300818">
    <property type="protein sequence ID" value="BAG62473.1"/>
    <property type="status" value="ALT_SEQ"/>
    <property type="molecule type" value="mRNA"/>
</dbReference>
<dbReference type="EMBL" id="BA000025">
    <property type="protein sequence ID" value="BAB63398.1"/>
    <property type="molecule type" value="Genomic_DNA"/>
</dbReference>
<dbReference type="EMBL" id="AB088115">
    <property type="protein sequence ID" value="BAC54951.1"/>
    <property type="molecule type" value="Genomic_DNA"/>
</dbReference>
<dbReference type="EMBL" id="AC004181">
    <property type="status" value="NOT_ANNOTATED_CDS"/>
    <property type="molecule type" value="Genomic_DNA"/>
</dbReference>
<dbReference type="EMBL" id="AL662847">
    <property type="status" value="NOT_ANNOTATED_CDS"/>
    <property type="molecule type" value="Genomic_DNA"/>
</dbReference>
<dbReference type="EMBL" id="AL662801">
    <property type="status" value="NOT_ANNOTATED_CDS"/>
    <property type="molecule type" value="Genomic_DNA"/>
</dbReference>
<dbReference type="EMBL" id="BX001040">
    <property type="status" value="NOT_ANNOTATED_CDS"/>
    <property type="molecule type" value="Genomic_DNA"/>
</dbReference>
<dbReference type="EMBL" id="AL929587">
    <property type="status" value="NOT_ANNOTATED_CDS"/>
    <property type="molecule type" value="Genomic_DNA"/>
</dbReference>
<dbReference type="EMBL" id="BX248516">
    <property type="status" value="NOT_ANNOTATED_CDS"/>
    <property type="molecule type" value="Genomic_DNA"/>
</dbReference>
<dbReference type="EMBL" id="CR753892">
    <property type="status" value="NOT_ANNOTATED_CDS"/>
    <property type="molecule type" value="Genomic_DNA"/>
</dbReference>
<dbReference type="EMBL" id="CR942185">
    <property type="status" value="NOT_ANNOTATED_CDS"/>
    <property type="molecule type" value="Genomic_DNA"/>
</dbReference>
<dbReference type="EMBL" id="BX927320">
    <property type="status" value="NOT_ANNOTATED_CDS"/>
    <property type="molecule type" value="Genomic_DNA"/>
</dbReference>
<dbReference type="EMBL" id="CH471081">
    <property type="protein sequence ID" value="EAX03417.1"/>
    <property type="molecule type" value="Genomic_DNA"/>
</dbReference>
<dbReference type="EMBL" id="CH471081">
    <property type="protein sequence ID" value="EAX03418.1"/>
    <property type="molecule type" value="Genomic_DNA"/>
</dbReference>
<dbReference type="EMBL" id="BC143671">
    <property type="protein sequence ID" value="AAI43672.1"/>
    <property type="molecule type" value="mRNA"/>
</dbReference>
<dbReference type="CCDS" id="CCDS4700.1">
    <molecule id="Q9UBC1-1"/>
</dbReference>
<dbReference type="CCDS" id="CCDS47399.1">
    <molecule id="Q9UBC1-3"/>
</dbReference>
<dbReference type="CCDS" id="CCDS47400.1">
    <molecule id="Q9UBC1-2"/>
</dbReference>
<dbReference type="PIR" id="S60561">
    <property type="entry name" value="S60561"/>
</dbReference>
<dbReference type="RefSeq" id="NP_001138433.1">
    <molecule id="Q9UBC1-3"/>
    <property type="nucleotide sequence ID" value="NM_001144961.2"/>
</dbReference>
<dbReference type="RefSeq" id="NP_001138434.1">
    <molecule id="Q9UBC1-2"/>
    <property type="nucleotide sequence ID" value="NM_001144962.2"/>
</dbReference>
<dbReference type="RefSeq" id="NP_001138435.1">
    <property type="nucleotide sequence ID" value="NM_001144963.1"/>
</dbReference>
<dbReference type="RefSeq" id="NP_004998.3">
    <molecule id="Q9UBC1-1"/>
    <property type="nucleotide sequence ID" value="NM_005007.3"/>
</dbReference>
<dbReference type="SMR" id="Q9UBC1"/>
<dbReference type="BioGRID" id="110862">
    <property type="interactions" value="100"/>
</dbReference>
<dbReference type="FunCoup" id="Q9UBC1">
    <property type="interactions" value="1654"/>
</dbReference>
<dbReference type="IntAct" id="Q9UBC1">
    <property type="interactions" value="82"/>
</dbReference>
<dbReference type="STRING" id="9606.ENSP00000365318"/>
<dbReference type="GlyGen" id="Q9UBC1">
    <property type="glycosylation" value="1 site, 1 O-linked glycan (1 site)"/>
</dbReference>
<dbReference type="iPTMnet" id="Q9UBC1"/>
<dbReference type="PhosphoSitePlus" id="Q9UBC1"/>
<dbReference type="BioMuta" id="NFKBIL1"/>
<dbReference type="DMDM" id="44888077"/>
<dbReference type="jPOST" id="Q9UBC1"/>
<dbReference type="MassIVE" id="Q9UBC1"/>
<dbReference type="PaxDb" id="9606-ENSP00000365318"/>
<dbReference type="PeptideAtlas" id="Q9UBC1"/>
<dbReference type="ProteomicsDB" id="63900"/>
<dbReference type="ProteomicsDB" id="63914"/>
<dbReference type="ProteomicsDB" id="83931">
    <molecule id="Q9UBC1-1"/>
</dbReference>
<dbReference type="ProteomicsDB" id="83932">
    <molecule id="Q9UBC1-2"/>
</dbReference>
<dbReference type="Pumba" id="Q9UBC1"/>
<dbReference type="Antibodypedia" id="27150">
    <property type="antibodies" value="181 antibodies from 23 providers"/>
</dbReference>
<dbReference type="DNASU" id="4795"/>
<dbReference type="Ensembl" id="ENST00000376145.8">
    <molecule id="Q9UBC1-3"/>
    <property type="protein sequence ID" value="ENSP00000365315.4"/>
    <property type="gene ID" value="ENSG00000204498.11"/>
</dbReference>
<dbReference type="Ensembl" id="ENST00000376146.8">
    <molecule id="Q9UBC1-2"/>
    <property type="protein sequence ID" value="ENSP00000365316.4"/>
    <property type="gene ID" value="ENSG00000204498.11"/>
</dbReference>
<dbReference type="Ensembl" id="ENST00000376148.9">
    <molecule id="Q9UBC1-1"/>
    <property type="protein sequence ID" value="ENSP00000365318.4"/>
    <property type="gene ID" value="ENSG00000204498.11"/>
</dbReference>
<dbReference type="Ensembl" id="ENST00000383500.4">
    <property type="protein sequence ID" value="ENSP00000372992.4"/>
    <property type="gene ID" value="ENSG00000206440.10"/>
</dbReference>
<dbReference type="Ensembl" id="ENST00000400279.7">
    <property type="protein sequence ID" value="ENSP00000383137.3"/>
    <property type="gene ID" value="ENSG00000206440.10"/>
</dbReference>
<dbReference type="Ensembl" id="ENST00000400285.7">
    <property type="protein sequence ID" value="ENSP00000383142.3"/>
    <property type="gene ID" value="ENSG00000206440.10"/>
</dbReference>
<dbReference type="Ensembl" id="ENST00000414391.6">
    <property type="protein sequence ID" value="ENSP00000414084.2"/>
    <property type="gene ID" value="ENSG00000234530.8"/>
</dbReference>
<dbReference type="Ensembl" id="ENST00000419122.6">
    <property type="protein sequence ID" value="ENSP00000394486.2"/>
    <property type="gene ID" value="ENSG00000234530.8"/>
</dbReference>
<dbReference type="Ensembl" id="ENST00000419623.6">
    <property type="protein sequence ID" value="ENSP00000414206.2"/>
    <property type="gene ID" value="ENSG00000236346.8"/>
</dbReference>
<dbReference type="Ensembl" id="ENST00000421396.2">
    <property type="protein sequence ID" value="ENSP00000399871.2"/>
    <property type="gene ID" value="ENSG00000235125.8"/>
</dbReference>
<dbReference type="Ensembl" id="ENST00000424652.6">
    <property type="protein sequence ID" value="ENSP00000395544.2"/>
    <property type="gene ID" value="ENSG00000236346.8"/>
</dbReference>
<dbReference type="Ensembl" id="ENST00000428467.6">
    <property type="protein sequence ID" value="ENSP00000407809.2"/>
    <property type="gene ID" value="ENSG00000236346.8"/>
</dbReference>
<dbReference type="Ensembl" id="ENST00000430501.2">
    <property type="protein sequence ID" value="ENSP00000404901.2"/>
    <property type="gene ID" value="ENSG00000236196.8"/>
</dbReference>
<dbReference type="Ensembl" id="ENST00000430961.6">
    <property type="protein sequence ID" value="ENSP00000411174.2"/>
    <property type="gene ID" value="ENSG00000235125.8"/>
</dbReference>
<dbReference type="Ensembl" id="ENST00000432160.6">
    <property type="protein sequence ID" value="ENSP00000411611.2"/>
    <property type="gene ID" value="ENSG00000227565.8"/>
</dbReference>
<dbReference type="Ensembl" id="ENST00000434332.6">
    <property type="protein sequence ID" value="ENSP00000413952.2"/>
    <property type="gene ID" value="ENSG00000234530.8"/>
</dbReference>
<dbReference type="Ensembl" id="ENST00000442947.6">
    <property type="protein sequence ID" value="ENSP00000396656.2"/>
    <property type="gene ID" value="ENSG00000235125.8"/>
</dbReference>
<dbReference type="Ensembl" id="ENST00000451911.2">
    <property type="protein sequence ID" value="ENSP00000413643.2"/>
    <property type="gene ID" value="ENSG00000227565.8"/>
</dbReference>
<dbReference type="Ensembl" id="ENST00000453377.6">
    <property type="protein sequence ID" value="ENSP00000395977.2"/>
    <property type="gene ID" value="ENSG00000227565.8"/>
</dbReference>
<dbReference type="Ensembl" id="ENST00000455376.6">
    <property type="protein sequence ID" value="ENSP00000408426.2"/>
    <property type="gene ID" value="ENSG00000236196.8"/>
</dbReference>
<dbReference type="Ensembl" id="ENST00000456607.6">
    <property type="protein sequence ID" value="ENSP00000401830.2"/>
    <property type="gene ID" value="ENSG00000236196.8"/>
</dbReference>
<dbReference type="GeneID" id="4795"/>
<dbReference type="KEGG" id="hsa:4795"/>
<dbReference type="MANE-Select" id="ENST00000376148.9">
    <property type="protein sequence ID" value="ENSP00000365318.4"/>
    <property type="RefSeq nucleotide sequence ID" value="NM_005007.4"/>
    <property type="RefSeq protein sequence ID" value="NP_004998.3"/>
</dbReference>
<dbReference type="UCSC" id="uc003nub.4">
    <molecule id="Q9UBC1-1"/>
    <property type="organism name" value="human"/>
</dbReference>
<dbReference type="AGR" id="HGNC:7800"/>
<dbReference type="CTD" id="4795"/>
<dbReference type="DisGeNET" id="4795"/>
<dbReference type="GeneCards" id="NFKBIL1"/>
<dbReference type="HGNC" id="HGNC:7800">
    <property type="gene designation" value="NFKBIL1"/>
</dbReference>
<dbReference type="HPA" id="ENSG00000204498">
    <property type="expression patterns" value="Low tissue specificity"/>
</dbReference>
<dbReference type="MalaCards" id="NFKBIL1"/>
<dbReference type="MIM" id="180300">
    <property type="type" value="phenotype"/>
</dbReference>
<dbReference type="MIM" id="601022">
    <property type="type" value="gene"/>
</dbReference>
<dbReference type="neXtProt" id="NX_Q9UBC1"/>
<dbReference type="OpenTargets" id="ENSG00000204498"/>
<dbReference type="PharmGKB" id="PA31604"/>
<dbReference type="VEuPathDB" id="HostDB:ENSG00000204498"/>
<dbReference type="eggNOG" id="ENOG502QTMZ">
    <property type="taxonomic scope" value="Eukaryota"/>
</dbReference>
<dbReference type="GeneTree" id="ENSGT00390000013929"/>
<dbReference type="InParanoid" id="Q9UBC1"/>
<dbReference type="OMA" id="QEAQGDQ"/>
<dbReference type="OrthoDB" id="412109at2759"/>
<dbReference type="PAN-GO" id="Q9UBC1">
    <property type="GO annotations" value="3 GO annotations based on evolutionary models"/>
</dbReference>
<dbReference type="PhylomeDB" id="Q9UBC1"/>
<dbReference type="TreeFam" id="TF333242"/>
<dbReference type="PathwayCommons" id="Q9UBC1"/>
<dbReference type="SignaLink" id="Q9UBC1"/>
<dbReference type="BioGRID-ORCS" id="4795">
    <property type="hits" value="10 hits in 1155 CRISPR screens"/>
</dbReference>
<dbReference type="GeneWiki" id="NFKBIL1"/>
<dbReference type="GenomeRNAi" id="4795"/>
<dbReference type="Pharos" id="Q9UBC1">
    <property type="development level" value="Tbio"/>
</dbReference>
<dbReference type="PRO" id="PR:Q9UBC1"/>
<dbReference type="Proteomes" id="UP000005640">
    <property type="component" value="Chromosome 6"/>
</dbReference>
<dbReference type="RNAct" id="Q9UBC1">
    <property type="molecule type" value="protein"/>
</dbReference>
<dbReference type="Bgee" id="ENSG00000204498">
    <property type="expression patterns" value="Expressed in male germ line stem cell (sensu Vertebrata) in testis and 94 other cell types or tissues"/>
</dbReference>
<dbReference type="ExpressionAtlas" id="Q9UBC1">
    <property type="expression patterns" value="baseline and differential"/>
</dbReference>
<dbReference type="GO" id="GO:0005654">
    <property type="term" value="C:nucleoplasm"/>
    <property type="evidence" value="ECO:0000314"/>
    <property type="project" value="HPA"/>
</dbReference>
<dbReference type="GO" id="GO:0005634">
    <property type="term" value="C:nucleus"/>
    <property type="evidence" value="ECO:0000314"/>
    <property type="project" value="UniProtKB"/>
</dbReference>
<dbReference type="GO" id="GO:0140416">
    <property type="term" value="F:transcription regulator inhibitor activity"/>
    <property type="evidence" value="ECO:0007669"/>
    <property type="project" value="Ensembl"/>
</dbReference>
<dbReference type="GO" id="GO:0071222">
    <property type="term" value="P:cellular response to lipopolysaccharide"/>
    <property type="evidence" value="ECO:0000314"/>
    <property type="project" value="UniProtKB"/>
</dbReference>
<dbReference type="GO" id="GO:0043124">
    <property type="term" value="P:negative regulation of canonical NF-kappaB signal transduction"/>
    <property type="evidence" value="ECO:0007669"/>
    <property type="project" value="Ensembl"/>
</dbReference>
<dbReference type="GO" id="GO:0031665">
    <property type="term" value="P:negative regulation of lipopolysaccharide-mediated signaling pathway"/>
    <property type="evidence" value="ECO:0000314"/>
    <property type="project" value="UniProtKB"/>
</dbReference>
<dbReference type="GO" id="GO:0032088">
    <property type="term" value="P:negative regulation of NF-kappaB transcription factor activity"/>
    <property type="evidence" value="ECO:0000314"/>
    <property type="project" value="UniProtKB"/>
</dbReference>
<dbReference type="GO" id="GO:0034122">
    <property type="term" value="P:negative regulation of toll-like receptor signaling pathway"/>
    <property type="evidence" value="ECO:0000314"/>
    <property type="project" value="UniProtKB"/>
</dbReference>
<dbReference type="GO" id="GO:0032720">
    <property type="term" value="P:negative regulation of tumor necrosis factor production"/>
    <property type="evidence" value="ECO:0000315"/>
    <property type="project" value="UniProtKB"/>
</dbReference>
<dbReference type="FunFam" id="1.25.40.20:FF:000145">
    <property type="entry name" value="NF-kappa-B inhibitor-like protein 1 isoform X1"/>
    <property type="match status" value="1"/>
</dbReference>
<dbReference type="Gene3D" id="1.25.40.20">
    <property type="entry name" value="Ankyrin repeat-containing domain"/>
    <property type="match status" value="1"/>
</dbReference>
<dbReference type="InterPro" id="IPR036770">
    <property type="entry name" value="Ankyrin_rpt-contain_sf"/>
</dbReference>
<dbReference type="InterPro" id="IPR038753">
    <property type="entry name" value="NFKBIL1"/>
</dbReference>
<dbReference type="PANTHER" id="PTHR15263">
    <property type="entry name" value="I-KAPPA-B-LIKE PROTEIN IKBL"/>
    <property type="match status" value="1"/>
</dbReference>
<dbReference type="PANTHER" id="PTHR15263:SF1">
    <property type="entry name" value="NF-KAPPA-B INHIBITOR-LIKE PROTEIN 1"/>
    <property type="match status" value="1"/>
</dbReference>
<dbReference type="SUPFAM" id="SSF48403">
    <property type="entry name" value="Ankyrin repeat"/>
    <property type="match status" value="1"/>
</dbReference>
<dbReference type="PROSITE" id="PS50297">
    <property type="entry name" value="ANK_REP_REGION"/>
    <property type="match status" value="1"/>
</dbReference>
<comment type="function">
    <text evidence="5">Involved in the regulation of innate immune response. Acts as negative regulator of Toll-like receptor and interferon-regulatory factor (IRF) signaling pathways. Contributes to the negative regulation of transcriptional activation of NF-kappa-B target genes in response to endogenous proinflammatory stimuli.</text>
</comment>
<comment type="subunit">
    <text evidence="5">Interacts with CACTIN (via N-terminal domain); the interaction occurs in a proinflammatory-independent manner.</text>
</comment>
<comment type="interaction">
    <interactant intactId="EBI-1043728">
        <id>Q9UBC1</id>
    </interactant>
    <interactant intactId="EBI-744782">
        <id>Q9Y5B8</id>
        <label>NME7</label>
    </interactant>
    <organismsDiffer>false</organismsDiffer>
    <experiments>3</experiments>
</comment>
<comment type="subcellular location">
    <subcellularLocation>
        <location evidence="5">Nucleus</location>
    </subcellularLocation>
    <text>Nuclear localization with a speckled expression pattern in some cells. Colocalizes with CACTIN in the nucleus.</text>
</comment>
<comment type="alternative products">
    <event type="alternative splicing"/>
    <isoform>
        <id>Q9UBC1-1</id>
        <name>1</name>
        <sequence type="displayed"/>
    </isoform>
    <isoform>
        <id>Q9UBC1-2</id>
        <name>2</name>
        <sequence type="described" ref="VSP_041075"/>
    </isoform>
    <isoform>
        <id>Q9UBC1-3</id>
        <name>3</name>
        <sequence type="described" ref="VSP_046261"/>
    </isoform>
</comment>
<comment type="tissue specificity">
    <text>Detected in different cell types including monocytes, T-cells, B-cells and hepatocytes.</text>
</comment>
<comment type="polymorphism">
    <text evidence="2 3 4">Arg-224 is found in the MHC 7.1 haplotype (HLA-A3,B7,DR15) population.</text>
</comment>
<comment type="disease" evidence="10">
    <disease id="DI-02692">
        <name>Rheumatoid arthritis</name>
        <acronym>RA</acronym>
        <description>An inflammatory disease with autoimmune features and a complex genetic component. It primarily affects the joints and is characterized by inflammatory changes in the synovial membranes and articular structures, widespread fibrinoid degeneration of the collagen fibers in mesenchymal tissues, and by atrophy and rarefaction of bony structures.</description>
        <dbReference type="MIM" id="180300"/>
    </disease>
    <text>Disease susceptibility is associated with variants affecting the gene represented in this entry.</text>
</comment>
<comment type="sequence caution" evidence="9">
    <conflict type="erroneous termination">
        <sequence resource="EMBL-CDS" id="BAG62473"/>
    </conflict>
    <text>Truncated C-terminus.</text>
</comment>
<accession>Q9UBC1</accession>
<accession>A6NL91</accession>
<accession>B4DUW1</accession>
<accession>Q14625</accession>
<accession>Q5HYU4</accession>
<accession>Q5RJ72</accession>
<accession>Q5ST96</accession>
<accession>Q5STV4</accession>
<accession>Q5STV5</accession>
<accession>Q9UBX4</accession>
<gene>
    <name type="primary">NFKBIL1</name>
    <name type="synonym">IKBL</name>
</gene>
<evidence type="ECO:0000256" key="1">
    <source>
        <dbReference type="SAM" id="MobiDB-lite"/>
    </source>
</evidence>
<evidence type="ECO:0000269" key="2">
    <source>
    </source>
</evidence>
<evidence type="ECO:0000269" key="3">
    <source>
    </source>
</evidence>
<evidence type="ECO:0000269" key="4">
    <source>
    </source>
</evidence>
<evidence type="ECO:0000269" key="5">
    <source>
    </source>
</evidence>
<evidence type="ECO:0000269" key="6">
    <source>
    </source>
</evidence>
<evidence type="ECO:0000303" key="7">
    <source>
    </source>
</evidence>
<evidence type="ECO:0000303" key="8">
    <source>
    </source>
</evidence>
<evidence type="ECO:0000305" key="9"/>
<evidence type="ECO:0000305" key="10">
    <source>
    </source>
</evidence>
<evidence type="ECO:0007744" key="11">
    <source>
    </source>
</evidence>
<keyword id="KW-0025">Alternative splicing</keyword>
<keyword id="KW-0040">ANK repeat</keyword>
<keyword id="KW-0539">Nucleus</keyword>
<keyword id="KW-0597">Phosphoprotein</keyword>
<keyword id="KW-1267">Proteomics identification</keyword>
<keyword id="KW-1185">Reference proteome</keyword>
<keyword id="KW-0677">Repeat</keyword>
<reference key="1">
    <citation type="journal article" date="1994" name="Hum. Mol. Genet.">
        <title>Characterization of a novel gene in the human major histocompatibility complex that encodes a potential new member of the I kappa B family of proteins.</title>
        <authorList>
            <person name="Albertella M.R."/>
            <person name="Campbell D.R."/>
        </authorList>
    </citation>
    <scope>NUCLEOTIDE SEQUENCE [MRNA] (ISOFORM 1)</scope>
    <scope>VARIANT CYS-224</scope>
    <source>
        <tissue>Premonocytic leukemia</tissue>
    </source>
</reference>
<reference key="2">
    <citation type="journal article" date="1998" name="Genomics">
        <title>Nucleotide sequencing analysis of the 146-kilobase segment around the IkBL and MICA genes at the centromeric end of the HLA class I region.</title>
        <authorList>
            <person name="Shiina T."/>
            <person name="Tamiya G."/>
            <person name="Oka A."/>
            <person name="Yamagata T."/>
            <person name="Yamagata N."/>
            <person name="Kikkawa E."/>
            <person name="Goto K."/>
            <person name="Mizuki N."/>
            <person name="Watanabe K."/>
            <person name="Fukuzumi Y."/>
            <person name="Taguchi S."/>
            <person name="Sugawara C."/>
            <person name="Ono A."/>
            <person name="Chen L."/>
            <person name="Yamazaki M."/>
            <person name="Tashiro H."/>
            <person name="Ando A."/>
            <person name="Ikemura T."/>
            <person name="Kimura M."/>
            <person name="Inoko H."/>
        </authorList>
    </citation>
    <scope>NUCLEOTIDE SEQUENCE [GENOMIC DNA]</scope>
</reference>
<reference key="3">
    <citation type="journal article" date="1999" name="Immunogenetics">
        <title>The central MHC gene IKBL carries a structural polymorphism that is associated with HLA-A3,B7,DR15.</title>
        <authorList>
            <person name="Allcock R.J.N."/>
            <person name="Christiansen F.T."/>
            <person name="Price P."/>
        </authorList>
    </citation>
    <scope>NUCLEOTIDE SEQUENCE [MRNA] (ISOFORM 1)</scope>
    <scope>VARIANT CYS-224</scope>
</reference>
<reference key="4">
    <citation type="journal article" date="1999" name="J. Immunol.">
        <title>A new member of the Ig superfamily and a V-ATPase G subunit are among the predicted products of novel genes close to the TNF locus in the human MHC.</title>
        <authorList>
            <person name="Neville M.J."/>
            <person name="Campbell R.D."/>
        </authorList>
    </citation>
    <scope>NUCLEOTIDE SEQUENCE [GENOMIC DNA]</scope>
</reference>
<reference key="5">
    <citation type="journal article" date="2004" name="Nat. Genet.">
        <title>Complete sequencing and characterization of 21,243 full-length human cDNAs.</title>
        <authorList>
            <person name="Ota T."/>
            <person name="Suzuki Y."/>
            <person name="Nishikawa T."/>
            <person name="Otsuki T."/>
            <person name="Sugiyama T."/>
            <person name="Irie R."/>
            <person name="Wakamatsu A."/>
            <person name="Hayashi K."/>
            <person name="Sato H."/>
            <person name="Nagai K."/>
            <person name="Kimura K."/>
            <person name="Makita H."/>
            <person name="Sekine M."/>
            <person name="Obayashi M."/>
            <person name="Nishi T."/>
            <person name="Shibahara T."/>
            <person name="Tanaka T."/>
            <person name="Ishii S."/>
            <person name="Yamamoto J."/>
            <person name="Saito K."/>
            <person name="Kawai Y."/>
            <person name="Isono Y."/>
            <person name="Nakamura Y."/>
            <person name="Nagahari K."/>
            <person name="Murakami K."/>
            <person name="Yasuda T."/>
            <person name="Iwayanagi T."/>
            <person name="Wagatsuma M."/>
            <person name="Shiratori A."/>
            <person name="Sudo H."/>
            <person name="Hosoiri T."/>
            <person name="Kaku Y."/>
            <person name="Kodaira H."/>
            <person name="Kondo H."/>
            <person name="Sugawara M."/>
            <person name="Takahashi M."/>
            <person name="Kanda K."/>
            <person name="Yokoi T."/>
            <person name="Furuya T."/>
            <person name="Kikkawa E."/>
            <person name="Omura Y."/>
            <person name="Abe K."/>
            <person name="Kamihara K."/>
            <person name="Katsuta N."/>
            <person name="Sato K."/>
            <person name="Tanikawa M."/>
            <person name="Yamazaki M."/>
            <person name="Ninomiya K."/>
            <person name="Ishibashi T."/>
            <person name="Yamashita H."/>
            <person name="Murakawa K."/>
            <person name="Fujimori K."/>
            <person name="Tanai H."/>
            <person name="Kimata M."/>
            <person name="Watanabe M."/>
            <person name="Hiraoka S."/>
            <person name="Chiba Y."/>
            <person name="Ishida S."/>
            <person name="Ono Y."/>
            <person name="Takiguchi S."/>
            <person name="Watanabe S."/>
            <person name="Yosida M."/>
            <person name="Hotuta T."/>
            <person name="Kusano J."/>
            <person name="Kanehori K."/>
            <person name="Takahashi-Fujii A."/>
            <person name="Hara H."/>
            <person name="Tanase T.-O."/>
            <person name="Nomura Y."/>
            <person name="Togiya S."/>
            <person name="Komai F."/>
            <person name="Hara R."/>
            <person name="Takeuchi K."/>
            <person name="Arita M."/>
            <person name="Imose N."/>
            <person name="Musashino K."/>
            <person name="Yuuki H."/>
            <person name="Oshima A."/>
            <person name="Sasaki N."/>
            <person name="Aotsuka S."/>
            <person name="Yoshikawa Y."/>
            <person name="Matsunawa H."/>
            <person name="Ichihara T."/>
            <person name="Shiohata N."/>
            <person name="Sano S."/>
            <person name="Moriya S."/>
            <person name="Momiyama H."/>
            <person name="Satoh N."/>
            <person name="Takami S."/>
            <person name="Terashima Y."/>
            <person name="Suzuki O."/>
            <person name="Nakagawa S."/>
            <person name="Senoh A."/>
            <person name="Mizoguchi H."/>
            <person name="Goto Y."/>
            <person name="Shimizu F."/>
            <person name="Wakebe H."/>
            <person name="Hishigaki H."/>
            <person name="Watanabe T."/>
            <person name="Sugiyama A."/>
            <person name="Takemoto M."/>
            <person name="Kawakami B."/>
            <person name="Yamazaki M."/>
            <person name="Watanabe K."/>
            <person name="Kumagai A."/>
            <person name="Itakura S."/>
            <person name="Fukuzumi Y."/>
            <person name="Fujimori Y."/>
            <person name="Komiyama M."/>
            <person name="Tashiro H."/>
            <person name="Tanigami A."/>
            <person name="Fujiwara T."/>
            <person name="Ono T."/>
            <person name="Yamada K."/>
            <person name="Fujii Y."/>
            <person name="Ozaki K."/>
            <person name="Hirao M."/>
            <person name="Ohmori Y."/>
            <person name="Kawabata A."/>
            <person name="Hikiji T."/>
            <person name="Kobatake N."/>
            <person name="Inagaki H."/>
            <person name="Ikema Y."/>
            <person name="Okamoto S."/>
            <person name="Okitani R."/>
            <person name="Kawakami T."/>
            <person name="Noguchi S."/>
            <person name="Itoh T."/>
            <person name="Shigeta K."/>
            <person name="Senba T."/>
            <person name="Matsumura K."/>
            <person name="Nakajima Y."/>
            <person name="Mizuno T."/>
            <person name="Morinaga M."/>
            <person name="Sasaki M."/>
            <person name="Togashi T."/>
            <person name="Oyama M."/>
            <person name="Hata H."/>
            <person name="Watanabe M."/>
            <person name="Komatsu T."/>
            <person name="Mizushima-Sugano J."/>
            <person name="Satoh T."/>
            <person name="Shirai Y."/>
            <person name="Takahashi Y."/>
            <person name="Nakagawa K."/>
            <person name="Okumura K."/>
            <person name="Nagase T."/>
            <person name="Nomura N."/>
            <person name="Kikuchi H."/>
            <person name="Masuho Y."/>
            <person name="Yamashita R."/>
            <person name="Nakai K."/>
            <person name="Yada T."/>
            <person name="Nakamura Y."/>
            <person name="Ohara O."/>
            <person name="Isogai T."/>
            <person name="Sugano S."/>
        </authorList>
    </citation>
    <scope>NUCLEOTIDE SEQUENCE [LARGE SCALE MRNA] (ISOFORM 2)</scope>
</reference>
<reference key="6">
    <citation type="submission" date="1999-09" db="EMBL/GenBank/DDBJ databases">
        <title>Homo sapiens 2,229,817bp genomic DNA of 6p21.3 HLA class I region.</title>
        <authorList>
            <person name="Shiina S."/>
            <person name="Tamiya G."/>
            <person name="Oka A."/>
            <person name="Inoko H."/>
        </authorList>
    </citation>
    <scope>NUCLEOTIDE SEQUENCE [LARGE SCALE GENOMIC DNA]</scope>
</reference>
<reference key="7">
    <citation type="submission" date="2002-07" db="EMBL/GenBank/DDBJ databases">
        <title>Genome diversity in HLA: a new strategy for detection of genetic polymorphisms in expressed genes within the HLA class III and class I regions.</title>
        <authorList>
            <person name="Shiina T."/>
            <person name="Ota M."/>
            <person name="Katsuyama Y."/>
            <person name="Hashimoto N."/>
            <person name="Inoko H."/>
        </authorList>
    </citation>
    <scope>NUCLEOTIDE SEQUENCE [LARGE SCALE GENOMIC DNA]</scope>
</reference>
<reference key="8">
    <citation type="journal article" date="2003" name="Nature">
        <title>The DNA sequence and analysis of human chromosome 6.</title>
        <authorList>
            <person name="Mungall A.J."/>
            <person name="Palmer S.A."/>
            <person name="Sims S.K."/>
            <person name="Edwards C.A."/>
            <person name="Ashurst J.L."/>
            <person name="Wilming L."/>
            <person name="Jones M.C."/>
            <person name="Horton R."/>
            <person name="Hunt S.E."/>
            <person name="Scott C.E."/>
            <person name="Gilbert J.G.R."/>
            <person name="Clamp M.E."/>
            <person name="Bethel G."/>
            <person name="Milne S."/>
            <person name="Ainscough R."/>
            <person name="Almeida J.P."/>
            <person name="Ambrose K.D."/>
            <person name="Andrews T.D."/>
            <person name="Ashwell R.I.S."/>
            <person name="Babbage A.K."/>
            <person name="Bagguley C.L."/>
            <person name="Bailey J."/>
            <person name="Banerjee R."/>
            <person name="Barker D.J."/>
            <person name="Barlow K.F."/>
            <person name="Bates K."/>
            <person name="Beare D.M."/>
            <person name="Beasley H."/>
            <person name="Beasley O."/>
            <person name="Bird C.P."/>
            <person name="Blakey S.E."/>
            <person name="Bray-Allen S."/>
            <person name="Brook J."/>
            <person name="Brown A.J."/>
            <person name="Brown J.Y."/>
            <person name="Burford D.C."/>
            <person name="Burrill W."/>
            <person name="Burton J."/>
            <person name="Carder C."/>
            <person name="Carter N.P."/>
            <person name="Chapman J.C."/>
            <person name="Clark S.Y."/>
            <person name="Clark G."/>
            <person name="Clee C.M."/>
            <person name="Clegg S."/>
            <person name="Cobley V."/>
            <person name="Collier R.E."/>
            <person name="Collins J.E."/>
            <person name="Colman L.K."/>
            <person name="Corby N.R."/>
            <person name="Coville G.J."/>
            <person name="Culley K.M."/>
            <person name="Dhami P."/>
            <person name="Davies J."/>
            <person name="Dunn M."/>
            <person name="Earthrowl M.E."/>
            <person name="Ellington A.E."/>
            <person name="Evans K.A."/>
            <person name="Faulkner L."/>
            <person name="Francis M.D."/>
            <person name="Frankish A."/>
            <person name="Frankland J."/>
            <person name="French L."/>
            <person name="Garner P."/>
            <person name="Garnett J."/>
            <person name="Ghori M.J."/>
            <person name="Gilby L.M."/>
            <person name="Gillson C.J."/>
            <person name="Glithero R.J."/>
            <person name="Grafham D.V."/>
            <person name="Grant M."/>
            <person name="Gribble S."/>
            <person name="Griffiths C."/>
            <person name="Griffiths M.N.D."/>
            <person name="Hall R."/>
            <person name="Halls K.S."/>
            <person name="Hammond S."/>
            <person name="Harley J.L."/>
            <person name="Hart E.A."/>
            <person name="Heath P.D."/>
            <person name="Heathcott R."/>
            <person name="Holmes S.J."/>
            <person name="Howden P.J."/>
            <person name="Howe K.L."/>
            <person name="Howell G.R."/>
            <person name="Huckle E."/>
            <person name="Humphray S.J."/>
            <person name="Humphries M.D."/>
            <person name="Hunt A.R."/>
            <person name="Johnson C.M."/>
            <person name="Joy A.A."/>
            <person name="Kay M."/>
            <person name="Keenan S.J."/>
            <person name="Kimberley A.M."/>
            <person name="King A."/>
            <person name="Laird G.K."/>
            <person name="Langford C."/>
            <person name="Lawlor S."/>
            <person name="Leongamornlert D.A."/>
            <person name="Leversha M."/>
            <person name="Lloyd C.R."/>
            <person name="Lloyd D.M."/>
            <person name="Loveland J.E."/>
            <person name="Lovell J."/>
            <person name="Martin S."/>
            <person name="Mashreghi-Mohammadi M."/>
            <person name="Maslen G.L."/>
            <person name="Matthews L."/>
            <person name="McCann O.T."/>
            <person name="McLaren S.J."/>
            <person name="McLay K."/>
            <person name="McMurray A."/>
            <person name="Moore M.J.F."/>
            <person name="Mullikin J.C."/>
            <person name="Niblett D."/>
            <person name="Nickerson T."/>
            <person name="Novik K.L."/>
            <person name="Oliver K."/>
            <person name="Overton-Larty E.K."/>
            <person name="Parker A."/>
            <person name="Patel R."/>
            <person name="Pearce A.V."/>
            <person name="Peck A.I."/>
            <person name="Phillimore B.J.C.T."/>
            <person name="Phillips S."/>
            <person name="Plumb R.W."/>
            <person name="Porter K.M."/>
            <person name="Ramsey Y."/>
            <person name="Ranby S.A."/>
            <person name="Rice C.M."/>
            <person name="Ross M.T."/>
            <person name="Searle S.M."/>
            <person name="Sehra H.K."/>
            <person name="Sheridan E."/>
            <person name="Skuce C.D."/>
            <person name="Smith S."/>
            <person name="Smith M."/>
            <person name="Spraggon L."/>
            <person name="Squares S.L."/>
            <person name="Steward C.A."/>
            <person name="Sycamore N."/>
            <person name="Tamlyn-Hall G."/>
            <person name="Tester J."/>
            <person name="Theaker A.J."/>
            <person name="Thomas D.W."/>
            <person name="Thorpe A."/>
            <person name="Tracey A."/>
            <person name="Tromans A."/>
            <person name="Tubby B."/>
            <person name="Wall M."/>
            <person name="Wallis J.M."/>
            <person name="West A.P."/>
            <person name="White S.S."/>
            <person name="Whitehead S.L."/>
            <person name="Whittaker H."/>
            <person name="Wild A."/>
            <person name="Willey D.J."/>
            <person name="Wilmer T.E."/>
            <person name="Wood J.M."/>
            <person name="Wray P.W."/>
            <person name="Wyatt J.C."/>
            <person name="Young L."/>
            <person name="Younger R.M."/>
            <person name="Bentley D.R."/>
            <person name="Coulson A."/>
            <person name="Durbin R.M."/>
            <person name="Hubbard T."/>
            <person name="Sulston J.E."/>
            <person name="Dunham I."/>
            <person name="Rogers J."/>
            <person name="Beck S."/>
        </authorList>
    </citation>
    <scope>NUCLEOTIDE SEQUENCE [LARGE SCALE GENOMIC DNA]</scope>
</reference>
<reference key="9">
    <citation type="submission" date="2005-07" db="EMBL/GenBank/DDBJ databases">
        <authorList>
            <person name="Mural R.J."/>
            <person name="Istrail S."/>
            <person name="Sutton G."/>
            <person name="Florea L."/>
            <person name="Halpern A.L."/>
            <person name="Mobarry C.M."/>
            <person name="Lippert R."/>
            <person name="Walenz B."/>
            <person name="Shatkay H."/>
            <person name="Dew I."/>
            <person name="Miller J.R."/>
            <person name="Flanigan M.J."/>
            <person name="Edwards N.J."/>
            <person name="Bolanos R."/>
            <person name="Fasulo D."/>
            <person name="Halldorsson B.V."/>
            <person name="Hannenhalli S."/>
            <person name="Turner R."/>
            <person name="Yooseph S."/>
            <person name="Lu F."/>
            <person name="Nusskern D.R."/>
            <person name="Shue B.C."/>
            <person name="Zheng X.H."/>
            <person name="Zhong F."/>
            <person name="Delcher A.L."/>
            <person name="Huson D.H."/>
            <person name="Kravitz S.A."/>
            <person name="Mouchard L."/>
            <person name="Reinert K."/>
            <person name="Remington K.A."/>
            <person name="Clark A.G."/>
            <person name="Waterman M.S."/>
            <person name="Eichler E.E."/>
            <person name="Adams M.D."/>
            <person name="Hunkapiller M.W."/>
            <person name="Myers E.W."/>
            <person name="Venter J.C."/>
        </authorList>
    </citation>
    <scope>NUCLEOTIDE SEQUENCE [LARGE SCALE GENOMIC DNA]</scope>
</reference>
<reference key="10">
    <citation type="journal article" date="2004" name="Genome Res.">
        <title>The status, quality, and expansion of the NIH full-length cDNA project: the Mammalian Gene Collection (MGC).</title>
        <authorList>
            <consortium name="The MGC Project Team"/>
        </authorList>
    </citation>
    <scope>NUCLEOTIDE SEQUENCE [LARGE SCALE MRNA] (ISOFORM 3)</scope>
    <source>
        <tissue>Brain</tissue>
    </source>
</reference>
<reference key="11">
    <citation type="journal article" date="2008" name="Mol. Cell">
        <title>Kinase-selective enrichment enables quantitative phosphoproteomics of the kinome across the cell cycle.</title>
        <authorList>
            <person name="Daub H."/>
            <person name="Olsen J.V."/>
            <person name="Bairlein M."/>
            <person name="Gnad F."/>
            <person name="Oppermann F.S."/>
            <person name="Korner R."/>
            <person name="Greff Z."/>
            <person name="Keri G."/>
            <person name="Stemmann O."/>
            <person name="Mann M."/>
        </authorList>
    </citation>
    <scope>PHOSPHORYLATION [LARGE SCALE ANALYSIS] AT SER-150</scope>
    <scope>IDENTIFICATION BY MASS SPECTROMETRY [LARGE SCALE ANALYSIS]</scope>
    <source>
        <tissue>Cervix carcinoma</tissue>
    </source>
</reference>
<reference key="12">
    <citation type="journal article" date="2010" name="J. Biol. Chem.">
        <title>Cactin targets the MHC class III protein IkappaB-like (IkappaBL) and inhibits NF-kappaB and interferon-regulatory factor signaling pathways.</title>
        <authorList>
            <person name="Atzei P."/>
            <person name="Gargan S."/>
            <person name="Curran N."/>
            <person name="Moynagh P.N."/>
        </authorList>
    </citation>
    <scope>FUNCTION</scope>
    <scope>INTERACTION WITH CACTIN</scope>
    <scope>SUBCELLULAR LOCATION</scope>
</reference>
<reference key="13">
    <citation type="journal article" date="2003" name="Am. J. Hum. Genet.">
        <title>Identification of I kappa BL as the second major histocompatibility complex-linked susceptibility locus for rheumatoid arthritis.</title>
        <authorList>
            <person name="Okamoto K."/>
            <person name="Makino S."/>
            <person name="Yoshikawa Y."/>
            <person name="Takaki A."/>
            <person name="Nagatsuka Y."/>
            <person name="Ota M."/>
            <person name="Tamiya G."/>
            <person name="Kimura A."/>
            <person name="Bahram S."/>
            <person name="Inoko H."/>
        </authorList>
    </citation>
    <scope>DISEASE</scope>
</reference>
<protein>
    <recommendedName>
        <fullName>NF-kappa-B inhibitor-like protein 1</fullName>
    </recommendedName>
    <alternativeName>
        <fullName>Inhibitor of kappa B-like protein</fullName>
        <shortName>I-kappa-B-like protein</shortName>
        <shortName>IkappaBL</shortName>
    </alternativeName>
    <alternativeName>
        <fullName>Nuclear factor of kappa light polypeptide gene enhancer in B-cells inhibitor-like 1</fullName>
    </alternativeName>
</protein>
<name>IKBL1_HUMAN</name>